<reference key="1">
    <citation type="submission" date="2008-01" db="EMBL/GenBank/DDBJ databases">
        <title>Complete sequence of Pseudomonas putida GB-1.</title>
        <authorList>
            <consortium name="US DOE Joint Genome Institute"/>
            <person name="Copeland A."/>
            <person name="Lucas S."/>
            <person name="Lapidus A."/>
            <person name="Barry K."/>
            <person name="Glavina del Rio T."/>
            <person name="Dalin E."/>
            <person name="Tice H."/>
            <person name="Pitluck S."/>
            <person name="Bruce D."/>
            <person name="Goodwin L."/>
            <person name="Chertkov O."/>
            <person name="Brettin T."/>
            <person name="Detter J.C."/>
            <person name="Han C."/>
            <person name="Kuske C.R."/>
            <person name="Schmutz J."/>
            <person name="Larimer F."/>
            <person name="Land M."/>
            <person name="Hauser L."/>
            <person name="Kyrpides N."/>
            <person name="Kim E."/>
            <person name="McCarthy J.K."/>
            <person name="Richardson P."/>
        </authorList>
    </citation>
    <scope>NUCLEOTIDE SEQUENCE [LARGE SCALE GENOMIC DNA]</scope>
    <source>
        <strain>GB-1</strain>
    </source>
</reference>
<dbReference type="EC" id="2.7.4.9" evidence="1"/>
<dbReference type="EMBL" id="CP000926">
    <property type="protein sequence ID" value="ABY97400.1"/>
    <property type="molecule type" value="Genomic_DNA"/>
</dbReference>
<dbReference type="RefSeq" id="WP_012271167.1">
    <property type="nucleotide sequence ID" value="NC_010322.1"/>
</dbReference>
<dbReference type="SMR" id="B0KF60"/>
<dbReference type="KEGG" id="ppg:PputGB1_1495"/>
<dbReference type="eggNOG" id="COG0125">
    <property type="taxonomic scope" value="Bacteria"/>
</dbReference>
<dbReference type="HOGENOM" id="CLU_049131_0_2_6"/>
<dbReference type="Proteomes" id="UP000002157">
    <property type="component" value="Chromosome"/>
</dbReference>
<dbReference type="GO" id="GO:0005829">
    <property type="term" value="C:cytosol"/>
    <property type="evidence" value="ECO:0007669"/>
    <property type="project" value="TreeGrafter"/>
</dbReference>
<dbReference type="GO" id="GO:0005524">
    <property type="term" value="F:ATP binding"/>
    <property type="evidence" value="ECO:0007669"/>
    <property type="project" value="UniProtKB-UniRule"/>
</dbReference>
<dbReference type="GO" id="GO:0004798">
    <property type="term" value="F:dTMP kinase activity"/>
    <property type="evidence" value="ECO:0007669"/>
    <property type="project" value="UniProtKB-UniRule"/>
</dbReference>
<dbReference type="GO" id="GO:0006233">
    <property type="term" value="P:dTDP biosynthetic process"/>
    <property type="evidence" value="ECO:0007669"/>
    <property type="project" value="InterPro"/>
</dbReference>
<dbReference type="GO" id="GO:0006235">
    <property type="term" value="P:dTTP biosynthetic process"/>
    <property type="evidence" value="ECO:0007669"/>
    <property type="project" value="UniProtKB-UniRule"/>
</dbReference>
<dbReference type="GO" id="GO:0006227">
    <property type="term" value="P:dUDP biosynthetic process"/>
    <property type="evidence" value="ECO:0007669"/>
    <property type="project" value="TreeGrafter"/>
</dbReference>
<dbReference type="CDD" id="cd01672">
    <property type="entry name" value="TMPK"/>
    <property type="match status" value="1"/>
</dbReference>
<dbReference type="FunFam" id="3.40.50.300:FF:000321">
    <property type="entry name" value="Thymidylate kinase"/>
    <property type="match status" value="1"/>
</dbReference>
<dbReference type="Gene3D" id="3.40.50.300">
    <property type="entry name" value="P-loop containing nucleotide triphosphate hydrolases"/>
    <property type="match status" value="1"/>
</dbReference>
<dbReference type="HAMAP" id="MF_00165">
    <property type="entry name" value="Thymidylate_kinase"/>
    <property type="match status" value="1"/>
</dbReference>
<dbReference type="InterPro" id="IPR027417">
    <property type="entry name" value="P-loop_NTPase"/>
</dbReference>
<dbReference type="InterPro" id="IPR039430">
    <property type="entry name" value="Thymidylate_kin-like_dom"/>
</dbReference>
<dbReference type="InterPro" id="IPR018094">
    <property type="entry name" value="Thymidylate_kinase"/>
</dbReference>
<dbReference type="NCBIfam" id="TIGR00041">
    <property type="entry name" value="DTMP_kinase"/>
    <property type="match status" value="1"/>
</dbReference>
<dbReference type="PANTHER" id="PTHR10344">
    <property type="entry name" value="THYMIDYLATE KINASE"/>
    <property type="match status" value="1"/>
</dbReference>
<dbReference type="PANTHER" id="PTHR10344:SF4">
    <property type="entry name" value="UMP-CMP KINASE 2, MITOCHONDRIAL"/>
    <property type="match status" value="1"/>
</dbReference>
<dbReference type="Pfam" id="PF02223">
    <property type="entry name" value="Thymidylate_kin"/>
    <property type="match status" value="1"/>
</dbReference>
<dbReference type="SUPFAM" id="SSF52540">
    <property type="entry name" value="P-loop containing nucleoside triphosphate hydrolases"/>
    <property type="match status" value="1"/>
</dbReference>
<organism>
    <name type="scientific">Pseudomonas putida (strain GB-1)</name>
    <dbReference type="NCBI Taxonomy" id="76869"/>
    <lineage>
        <taxon>Bacteria</taxon>
        <taxon>Pseudomonadati</taxon>
        <taxon>Pseudomonadota</taxon>
        <taxon>Gammaproteobacteria</taxon>
        <taxon>Pseudomonadales</taxon>
        <taxon>Pseudomonadaceae</taxon>
        <taxon>Pseudomonas</taxon>
    </lineage>
</organism>
<keyword id="KW-0067">ATP-binding</keyword>
<keyword id="KW-0418">Kinase</keyword>
<keyword id="KW-0545">Nucleotide biosynthesis</keyword>
<keyword id="KW-0547">Nucleotide-binding</keyword>
<keyword id="KW-0808">Transferase</keyword>
<sequence>MSGLFITLEGPEGAGKSTNRDYLAARLREHGLDVVLTREPGGTPLAERVRELLLAPSDESMAADTELLLVFAARAQHLAQVIRPALARGAVVLCDRFTDATYAYQGGGRGLSVERIATLEQFVQGGLRPDLTLVFDLPVEVGLARAAARGRLDRFEQEGQAFFEAVRQAYLQRAQRAPQRYSLLDAAQSLEAVQRDIDALLPGIVERCRG</sequence>
<feature type="chain" id="PRO_1000076971" description="Thymidylate kinase">
    <location>
        <begin position="1"/>
        <end position="210"/>
    </location>
</feature>
<feature type="binding site" evidence="1">
    <location>
        <begin position="10"/>
        <end position="17"/>
    </location>
    <ligand>
        <name>ATP</name>
        <dbReference type="ChEBI" id="CHEBI:30616"/>
    </ligand>
</feature>
<gene>
    <name evidence="1" type="primary">tmk</name>
    <name type="ordered locus">PputGB1_1495</name>
</gene>
<evidence type="ECO:0000255" key="1">
    <source>
        <dbReference type="HAMAP-Rule" id="MF_00165"/>
    </source>
</evidence>
<comment type="function">
    <text evidence="1">Phosphorylation of dTMP to form dTDP in both de novo and salvage pathways of dTTP synthesis.</text>
</comment>
<comment type="catalytic activity">
    <reaction evidence="1">
        <text>dTMP + ATP = dTDP + ADP</text>
        <dbReference type="Rhea" id="RHEA:13517"/>
        <dbReference type="ChEBI" id="CHEBI:30616"/>
        <dbReference type="ChEBI" id="CHEBI:58369"/>
        <dbReference type="ChEBI" id="CHEBI:63528"/>
        <dbReference type="ChEBI" id="CHEBI:456216"/>
        <dbReference type="EC" id="2.7.4.9"/>
    </reaction>
</comment>
<comment type="similarity">
    <text evidence="1">Belongs to the thymidylate kinase family.</text>
</comment>
<protein>
    <recommendedName>
        <fullName evidence="1">Thymidylate kinase</fullName>
        <ecNumber evidence="1">2.7.4.9</ecNumber>
    </recommendedName>
    <alternativeName>
        <fullName evidence="1">dTMP kinase</fullName>
    </alternativeName>
</protein>
<accession>B0KF60</accession>
<proteinExistence type="inferred from homology"/>
<name>KTHY_PSEPG</name>